<reference key="1">
    <citation type="journal article" date="2003" name="Genome Res.">
        <title>Genome sequence of an M3 strain of Streptococcus pyogenes reveals a large-scale genomic rearrangement in invasive strains and new insights into phage evolution.</title>
        <authorList>
            <person name="Nakagawa I."/>
            <person name="Kurokawa K."/>
            <person name="Yamashita A."/>
            <person name="Nakata M."/>
            <person name="Tomiyasu Y."/>
            <person name="Okahashi N."/>
            <person name="Kawabata S."/>
            <person name="Yamazaki K."/>
            <person name="Shiba T."/>
            <person name="Yasunaga T."/>
            <person name="Hayashi H."/>
            <person name="Hattori M."/>
            <person name="Hamada S."/>
        </authorList>
    </citation>
    <scope>NUCLEOTIDE SEQUENCE [LARGE SCALE GENOMIC DNA]</scope>
    <source>
        <strain>SSI-1</strain>
    </source>
</reference>
<keyword id="KW-0963">Cytoplasm</keyword>
<keyword id="KW-0229">DNA integration</keyword>
<keyword id="KW-0233">DNA recombination</keyword>
<keyword id="KW-0238">DNA-binding</keyword>
<proteinExistence type="inferred from homology"/>
<dbReference type="EMBL" id="BA000034">
    <property type="protein sequence ID" value="BAC64688.1"/>
    <property type="molecule type" value="Genomic_DNA"/>
</dbReference>
<dbReference type="SMR" id="P0DH47"/>
<dbReference type="KEGG" id="sps:SPs1593"/>
<dbReference type="HOGENOM" id="CLU_1128554_0_0_9"/>
<dbReference type="GO" id="GO:0005737">
    <property type="term" value="C:cytoplasm"/>
    <property type="evidence" value="ECO:0007669"/>
    <property type="project" value="UniProtKB-SubCell"/>
</dbReference>
<dbReference type="GO" id="GO:0003677">
    <property type="term" value="F:DNA binding"/>
    <property type="evidence" value="ECO:0007669"/>
    <property type="project" value="UniProtKB-KW"/>
</dbReference>
<dbReference type="GO" id="GO:0009037">
    <property type="term" value="F:tyrosine-based site-specific recombinase activity"/>
    <property type="evidence" value="ECO:0007669"/>
    <property type="project" value="UniProtKB-UniRule"/>
</dbReference>
<dbReference type="GO" id="GO:0006313">
    <property type="term" value="P:DNA transposition"/>
    <property type="evidence" value="ECO:0007669"/>
    <property type="project" value="UniProtKB-UniRule"/>
</dbReference>
<dbReference type="CDD" id="cd01190">
    <property type="entry name" value="INT_StrepXerD_C_like"/>
    <property type="match status" value="1"/>
</dbReference>
<dbReference type="Gene3D" id="1.10.150.130">
    <property type="match status" value="1"/>
</dbReference>
<dbReference type="Gene3D" id="1.10.443.10">
    <property type="entry name" value="Intergrase catalytic core"/>
    <property type="match status" value="1"/>
</dbReference>
<dbReference type="HAMAP" id="MF_01817">
    <property type="entry name" value="Recomb_XerD_like"/>
    <property type="match status" value="1"/>
</dbReference>
<dbReference type="InterPro" id="IPR044068">
    <property type="entry name" value="CB"/>
</dbReference>
<dbReference type="InterPro" id="IPR011010">
    <property type="entry name" value="DNA_brk_join_enz"/>
</dbReference>
<dbReference type="InterPro" id="IPR013762">
    <property type="entry name" value="Integrase-like_cat_sf"/>
</dbReference>
<dbReference type="InterPro" id="IPR002104">
    <property type="entry name" value="Integrase_catalytic"/>
</dbReference>
<dbReference type="InterPro" id="IPR010998">
    <property type="entry name" value="Integrase_recombinase_N"/>
</dbReference>
<dbReference type="InterPro" id="IPR020876">
    <property type="entry name" value="Tyrosine_recombinase_XerD-like"/>
</dbReference>
<dbReference type="NCBIfam" id="NF002685">
    <property type="entry name" value="PRK02436.1"/>
    <property type="match status" value="1"/>
</dbReference>
<dbReference type="SUPFAM" id="SSF56349">
    <property type="entry name" value="DNA breaking-rejoining enzymes"/>
    <property type="match status" value="1"/>
</dbReference>
<dbReference type="PROSITE" id="PS51900">
    <property type="entry name" value="CB"/>
    <property type="match status" value="1"/>
</dbReference>
<dbReference type="PROSITE" id="PS51898">
    <property type="entry name" value="TYR_RECOMBINASE"/>
    <property type="match status" value="1"/>
</dbReference>
<sequence length="248" mass="28804">MKSYIEPFIASKALSQNSQKAYRYDLQQFCQLVGERVNQDKLLLYQNSIANLSLSAKKRKLSTANQFLYYLYQIKYLNSYFRLTDTMKVMRTEKQQAAIINTDIFYQKTPFVWGQLISLLILELGLTPSEVAGIEVANLDLSFQMLTLKTKKGVRVLPLSQILIPFLEQQLIGKEVYLFEHRGIPFSRQWFFNHLKTFVRSIGYEGLTAQKLREQFILKEKLAGKSIIELSDILGLKSPVTLEKYYKS</sequence>
<comment type="function">
    <text evidence="1">Putative tyrosine recombinase. Not involved in the cutting and rejoining of the recombining DNA molecules on dif(SL) site.</text>
</comment>
<comment type="subcellular location">
    <subcellularLocation>
        <location evidence="1">Cytoplasm</location>
    </subcellularLocation>
</comment>
<comment type="similarity">
    <text evidence="1">Belongs to the 'phage' integrase family. XerD-like subfamily.</text>
</comment>
<accession>P0DH47</accession>
<accession>Q8K8I6</accession>
<gene>
    <name type="ordered locus">SPs1593</name>
</gene>
<protein>
    <recommendedName>
        <fullName evidence="1">Tyrosine recombinase XerD-like</fullName>
    </recommendedName>
</protein>
<evidence type="ECO:0000255" key="1">
    <source>
        <dbReference type="HAMAP-Rule" id="MF_01817"/>
    </source>
</evidence>
<evidence type="ECO:0000255" key="2">
    <source>
        <dbReference type="PROSITE-ProRule" id="PRU01246"/>
    </source>
</evidence>
<evidence type="ECO:0000255" key="3">
    <source>
        <dbReference type="PROSITE-ProRule" id="PRU01248"/>
    </source>
</evidence>
<organism>
    <name type="scientific">Streptococcus pyogenes serotype M3 (strain SSI-1)</name>
    <dbReference type="NCBI Taxonomy" id="193567"/>
    <lineage>
        <taxon>Bacteria</taxon>
        <taxon>Bacillati</taxon>
        <taxon>Bacillota</taxon>
        <taxon>Bacilli</taxon>
        <taxon>Lactobacillales</taxon>
        <taxon>Streptococcaceae</taxon>
        <taxon>Streptococcus</taxon>
    </lineage>
</organism>
<name>XERDL_STRPQ</name>
<feature type="chain" id="PRO_0000411663" description="Tyrosine recombinase XerD-like">
    <location>
        <begin position="1"/>
        <end position="248"/>
    </location>
</feature>
<feature type="domain" description="Core-binding (CB)" evidence="3">
    <location>
        <begin position="1"/>
        <end position="72"/>
    </location>
</feature>
<feature type="domain" description="Tyr recombinase" evidence="2">
    <location>
        <begin position="85"/>
        <end position="248"/>
    </location>
</feature>
<feature type="active site" evidence="2">
    <location>
        <position position="149"/>
    </location>
</feature>
<feature type="active site" evidence="2">
    <location>
        <position position="213"/>
    </location>
</feature>
<feature type="active site" description="O-(3'-phospho-DNA)-tyrosine intermediate" evidence="2">
    <location>
        <position position="245"/>
    </location>
</feature>